<sequence length="921" mass="99919">MTEATGIVGEFLTLKEGTDADLLAMQCGDFYEFFAEDAEIVADELDLKVSQKSSHGSSYPMAGVPVDDLTPYVSALVERGYRVAIADQHETENGHAREITRVVTPGTHLETGDESAQYLAAVVREASRDSGDTYGIAATDVTTGQFQVTQLDDADAGEALTELYTFGPAEILPGPELRNDDEFLDRLRERTDAALTLHDSASFEPGRASHTVREQFGSETVDSVGIGDQNVAVRAAGAVLSYVEDTGVGTLAAVTRLQAYGERDHVDLDATTQRNLELTETMQGDSSGSLFDTIDHTVTAAGGRLLQQWLQRPRRNRAELQRRQSCVAALSEAAMARERIRETLSDAYDLERLAARATSGSADARDLRAVQETLALLGQVADAVTETERLAESPLADALDGADREAADSLAAELDSALVADPPGTVRQGGLFKRGHDDDLDEIIDEHEAALEWLETLPDREKERTGITHLSVDRNKTDGYYIQVGKSETDAVPEKYQHIKTLKNSKRYTTPELDEKERDVLRLEERRHDMEYEHFQRLRARVAEHATLLQDVGRTLAELDAFASLAVHAVENDWARPAVVDGNELSIEAGRHPVVEQTTEFVPNDLYMDDDRQFLIVTGPNMSGKSTYMRQAALITLLAQVGSFVPARSATVGLVDGIFTRVGALDELAQGRSTFMVEMQELSNILHSATEESLVILDEVGRGTATFDGISIAWAATEYIVNSIQSKTLFATHYHELTALGEELPTVENVHVAVDGEPRSAGSDGDVTFLRTVRDGPTDRSYGVHVADLAGVPEPVVDRSQAVLDRLRDDKAIEIRGSEQNDGGTTQAVFDLDSGQFRDGAAQSGGAAAGSTAEPVATDGDPEHAPGEAAAEGPKGDERAASLDSETEAVLSELTELDVNETPPVELMAKVQEWQAELDDE</sequence>
<organism>
    <name type="scientific">Haloarcula marismortui (strain ATCC 43049 / DSM 3752 / JCM 8966 / VKM B-1809)</name>
    <name type="common">Halobacterium marismortui</name>
    <dbReference type="NCBI Taxonomy" id="272569"/>
    <lineage>
        <taxon>Archaea</taxon>
        <taxon>Methanobacteriati</taxon>
        <taxon>Methanobacteriota</taxon>
        <taxon>Stenosarchaea group</taxon>
        <taxon>Halobacteria</taxon>
        <taxon>Halobacteriales</taxon>
        <taxon>Haloarculaceae</taxon>
        <taxon>Haloarcula</taxon>
    </lineage>
</organism>
<keyword id="KW-0067">ATP-binding</keyword>
<keyword id="KW-0227">DNA damage</keyword>
<keyword id="KW-0234">DNA repair</keyword>
<keyword id="KW-0238">DNA-binding</keyword>
<keyword id="KW-0547">Nucleotide-binding</keyword>
<keyword id="KW-1185">Reference proteome</keyword>
<reference key="1">
    <citation type="journal article" date="2004" name="Genome Res.">
        <title>Genome sequence of Haloarcula marismortui: a halophilic archaeon from the Dead Sea.</title>
        <authorList>
            <person name="Baliga N.S."/>
            <person name="Bonneau R."/>
            <person name="Facciotti M.T."/>
            <person name="Pan M."/>
            <person name="Glusman G."/>
            <person name="Deutsch E.W."/>
            <person name="Shannon P."/>
            <person name="Chiu Y."/>
            <person name="Weng R.S."/>
            <person name="Gan R.R."/>
            <person name="Hung P."/>
            <person name="Date S.V."/>
            <person name="Marcotte E."/>
            <person name="Hood L."/>
            <person name="Ng W.V."/>
        </authorList>
    </citation>
    <scope>NUCLEOTIDE SEQUENCE [LARGE SCALE GENOMIC DNA]</scope>
    <source>
        <strain>ATCC 43049 / DSM 3752 / JCM 8966 / VKM B-1809</strain>
    </source>
</reference>
<feature type="chain" id="PRO_0000224422" description="DNA mismatch repair protein MutS 1">
    <location>
        <begin position="1"/>
        <end position="921"/>
    </location>
</feature>
<feature type="region of interest" description="Disordered" evidence="2">
    <location>
        <begin position="837"/>
        <end position="887"/>
    </location>
</feature>
<feature type="compositionally biased region" description="Low complexity" evidence="2">
    <location>
        <begin position="840"/>
        <end position="853"/>
    </location>
</feature>
<feature type="binding site" evidence="1">
    <location>
        <begin position="619"/>
        <end position="626"/>
    </location>
    <ligand>
        <name>ATP</name>
        <dbReference type="ChEBI" id="CHEBI:30616"/>
    </ligand>
</feature>
<proteinExistence type="inferred from homology"/>
<evidence type="ECO:0000255" key="1">
    <source>
        <dbReference type="HAMAP-Rule" id="MF_00096"/>
    </source>
</evidence>
<evidence type="ECO:0000256" key="2">
    <source>
        <dbReference type="SAM" id="MobiDB-lite"/>
    </source>
</evidence>
<evidence type="ECO:0000305" key="3"/>
<gene>
    <name evidence="1" type="primary">mutS1</name>
    <name type="ordered locus">rrnAC2532</name>
</gene>
<accession>Q5UZG9</accession>
<dbReference type="EMBL" id="AY596297">
    <property type="protein sequence ID" value="AAV47334.1"/>
    <property type="status" value="ALT_INIT"/>
    <property type="molecule type" value="Genomic_DNA"/>
</dbReference>
<dbReference type="RefSeq" id="WP_049939015.1">
    <property type="nucleotide sequence ID" value="NC_006396.1"/>
</dbReference>
<dbReference type="SMR" id="Q5UZG9"/>
<dbReference type="STRING" id="272569.rrnAC2532"/>
<dbReference type="PaxDb" id="272569-rrnAC2532"/>
<dbReference type="EnsemblBacteria" id="AAV47334">
    <property type="protein sequence ID" value="AAV47334"/>
    <property type="gene ID" value="rrnAC2532"/>
</dbReference>
<dbReference type="GeneID" id="40153426"/>
<dbReference type="KEGG" id="hma:rrnAC2532"/>
<dbReference type="PATRIC" id="fig|272569.17.peg.3140"/>
<dbReference type="eggNOG" id="arCOG02896">
    <property type="taxonomic scope" value="Archaea"/>
</dbReference>
<dbReference type="HOGENOM" id="CLU_002472_3_1_2"/>
<dbReference type="Proteomes" id="UP000001169">
    <property type="component" value="Chromosome I"/>
</dbReference>
<dbReference type="GO" id="GO:0005524">
    <property type="term" value="F:ATP binding"/>
    <property type="evidence" value="ECO:0007669"/>
    <property type="project" value="UniProtKB-UniRule"/>
</dbReference>
<dbReference type="GO" id="GO:0140664">
    <property type="term" value="F:ATP-dependent DNA damage sensor activity"/>
    <property type="evidence" value="ECO:0007669"/>
    <property type="project" value="InterPro"/>
</dbReference>
<dbReference type="GO" id="GO:0003684">
    <property type="term" value="F:damaged DNA binding"/>
    <property type="evidence" value="ECO:0007669"/>
    <property type="project" value="UniProtKB-UniRule"/>
</dbReference>
<dbReference type="GO" id="GO:0030983">
    <property type="term" value="F:mismatched DNA binding"/>
    <property type="evidence" value="ECO:0007669"/>
    <property type="project" value="InterPro"/>
</dbReference>
<dbReference type="GO" id="GO:0006298">
    <property type="term" value="P:mismatch repair"/>
    <property type="evidence" value="ECO:0007669"/>
    <property type="project" value="UniProtKB-UniRule"/>
</dbReference>
<dbReference type="CDD" id="cd03284">
    <property type="entry name" value="ABC_MutS1"/>
    <property type="match status" value="1"/>
</dbReference>
<dbReference type="FunFam" id="3.40.50.300:FF:000870">
    <property type="entry name" value="MutS protein homolog 4"/>
    <property type="match status" value="1"/>
</dbReference>
<dbReference type="Gene3D" id="1.10.1420.10">
    <property type="match status" value="2"/>
</dbReference>
<dbReference type="Gene3D" id="3.40.1170.10">
    <property type="entry name" value="DNA repair protein MutS, domain I"/>
    <property type="match status" value="1"/>
</dbReference>
<dbReference type="Gene3D" id="3.30.420.110">
    <property type="entry name" value="MutS, connector domain"/>
    <property type="match status" value="1"/>
</dbReference>
<dbReference type="Gene3D" id="3.40.50.300">
    <property type="entry name" value="P-loop containing nucleotide triphosphate hydrolases"/>
    <property type="match status" value="1"/>
</dbReference>
<dbReference type="HAMAP" id="MF_00096">
    <property type="entry name" value="MutS"/>
    <property type="match status" value="1"/>
</dbReference>
<dbReference type="InterPro" id="IPR005748">
    <property type="entry name" value="DNA_mismatch_repair_MutS"/>
</dbReference>
<dbReference type="InterPro" id="IPR007695">
    <property type="entry name" value="DNA_mismatch_repair_MutS-lik_N"/>
</dbReference>
<dbReference type="InterPro" id="IPR017261">
    <property type="entry name" value="DNA_mismatch_repair_MutS/MSH"/>
</dbReference>
<dbReference type="InterPro" id="IPR000432">
    <property type="entry name" value="DNA_mismatch_repair_MutS_C"/>
</dbReference>
<dbReference type="InterPro" id="IPR007861">
    <property type="entry name" value="DNA_mismatch_repair_MutS_clamp"/>
</dbReference>
<dbReference type="InterPro" id="IPR007696">
    <property type="entry name" value="DNA_mismatch_repair_MutS_core"/>
</dbReference>
<dbReference type="InterPro" id="IPR016151">
    <property type="entry name" value="DNA_mismatch_repair_MutS_N"/>
</dbReference>
<dbReference type="InterPro" id="IPR036187">
    <property type="entry name" value="DNA_mismatch_repair_MutS_sf"/>
</dbReference>
<dbReference type="InterPro" id="IPR007860">
    <property type="entry name" value="DNA_mmatch_repair_MutS_con_dom"/>
</dbReference>
<dbReference type="InterPro" id="IPR045076">
    <property type="entry name" value="MutS"/>
</dbReference>
<dbReference type="InterPro" id="IPR036678">
    <property type="entry name" value="MutS_con_dom_sf"/>
</dbReference>
<dbReference type="InterPro" id="IPR027417">
    <property type="entry name" value="P-loop_NTPase"/>
</dbReference>
<dbReference type="NCBIfam" id="TIGR01070">
    <property type="entry name" value="mutS1"/>
    <property type="match status" value="1"/>
</dbReference>
<dbReference type="NCBIfam" id="NF003810">
    <property type="entry name" value="PRK05399.1"/>
    <property type="match status" value="1"/>
</dbReference>
<dbReference type="PANTHER" id="PTHR11361:SF34">
    <property type="entry name" value="DNA MISMATCH REPAIR PROTEIN MSH1, MITOCHONDRIAL"/>
    <property type="match status" value="1"/>
</dbReference>
<dbReference type="PANTHER" id="PTHR11361">
    <property type="entry name" value="DNA MISMATCH REPAIR PROTEIN MUTS FAMILY MEMBER"/>
    <property type="match status" value="1"/>
</dbReference>
<dbReference type="Pfam" id="PF01624">
    <property type="entry name" value="MutS_I"/>
    <property type="match status" value="1"/>
</dbReference>
<dbReference type="Pfam" id="PF05188">
    <property type="entry name" value="MutS_II"/>
    <property type="match status" value="1"/>
</dbReference>
<dbReference type="Pfam" id="PF05192">
    <property type="entry name" value="MutS_III"/>
    <property type="match status" value="1"/>
</dbReference>
<dbReference type="Pfam" id="PF05190">
    <property type="entry name" value="MutS_IV"/>
    <property type="match status" value="1"/>
</dbReference>
<dbReference type="Pfam" id="PF00488">
    <property type="entry name" value="MutS_V"/>
    <property type="match status" value="1"/>
</dbReference>
<dbReference type="PIRSF" id="PIRSF037677">
    <property type="entry name" value="DNA_mis_repair_Msh6"/>
    <property type="match status" value="1"/>
</dbReference>
<dbReference type="SMART" id="SM00534">
    <property type="entry name" value="MUTSac"/>
    <property type="match status" value="1"/>
</dbReference>
<dbReference type="SMART" id="SM00533">
    <property type="entry name" value="MUTSd"/>
    <property type="match status" value="1"/>
</dbReference>
<dbReference type="SUPFAM" id="SSF55271">
    <property type="entry name" value="DNA repair protein MutS, domain I"/>
    <property type="match status" value="1"/>
</dbReference>
<dbReference type="SUPFAM" id="SSF53150">
    <property type="entry name" value="DNA repair protein MutS, domain II"/>
    <property type="match status" value="1"/>
</dbReference>
<dbReference type="SUPFAM" id="SSF48334">
    <property type="entry name" value="DNA repair protein MutS, domain III"/>
    <property type="match status" value="1"/>
</dbReference>
<dbReference type="SUPFAM" id="SSF52540">
    <property type="entry name" value="P-loop containing nucleoside triphosphate hydrolases"/>
    <property type="match status" value="1"/>
</dbReference>
<dbReference type="PROSITE" id="PS00486">
    <property type="entry name" value="DNA_MISMATCH_REPAIR_2"/>
    <property type="match status" value="1"/>
</dbReference>
<protein>
    <recommendedName>
        <fullName evidence="1">DNA mismatch repair protein MutS 1</fullName>
    </recommendedName>
</protein>
<comment type="function">
    <text evidence="1">This protein is involved in the repair of mismatches in DNA. It is possible that it carries out the mismatch recognition step. This protein has a weak ATPase activity.</text>
</comment>
<comment type="similarity">
    <text evidence="1">Belongs to the DNA mismatch repair MutS family.</text>
</comment>
<comment type="sequence caution" evidence="3">
    <conflict type="erroneous initiation">
        <sequence resource="EMBL-CDS" id="AAV47334"/>
    </conflict>
</comment>
<name>MUTS1_HALMA</name>